<reference key="1">
    <citation type="journal article" date="1996" name="Mol. Cell. Biol.">
        <title>Synthetic enhancement of a TFIIB defect by a mutation in SSU72, an essential yeast gene encoding a novel protein that affects transcription start site selection in vivo.</title>
        <authorList>
            <person name="Sun Z.W."/>
            <person name="Hampsey M."/>
        </authorList>
    </citation>
    <scope>NUCLEOTIDE SEQUENCE [GENOMIC DNA]</scope>
</reference>
<reference key="2">
    <citation type="journal article" date="1997" name="Nature">
        <title>The nucleotide sequence of Saccharomyces cerevisiae chromosome XIV and its evolutionary implications.</title>
        <authorList>
            <person name="Philippsen P."/>
            <person name="Kleine K."/>
            <person name="Poehlmann R."/>
            <person name="Duesterhoeft A."/>
            <person name="Hamberg K."/>
            <person name="Hegemann J.H."/>
            <person name="Obermaier B."/>
            <person name="Urrestarazu L.A."/>
            <person name="Aert R."/>
            <person name="Albermann K."/>
            <person name="Altmann R."/>
            <person name="Andre B."/>
            <person name="Baladron V."/>
            <person name="Ballesta J.P.G."/>
            <person name="Becam A.-M."/>
            <person name="Beinhauer J.D."/>
            <person name="Boskovic J."/>
            <person name="Buitrago M.J."/>
            <person name="Bussereau F."/>
            <person name="Coster F."/>
            <person name="Crouzet M."/>
            <person name="D'Angelo M."/>
            <person name="Dal Pero F."/>
            <person name="De Antoni A."/>
            <person name="del Rey F."/>
            <person name="Doignon F."/>
            <person name="Domdey H."/>
            <person name="Dubois E."/>
            <person name="Fiedler T.A."/>
            <person name="Fleig U."/>
            <person name="Floeth M."/>
            <person name="Fritz C."/>
            <person name="Gaillardin C."/>
            <person name="Garcia-Cantalejo J.M."/>
            <person name="Glansdorff N."/>
            <person name="Goffeau A."/>
            <person name="Gueldener U."/>
            <person name="Herbert C.J."/>
            <person name="Heumann K."/>
            <person name="Heuss-Neitzel D."/>
            <person name="Hilbert H."/>
            <person name="Hinni K."/>
            <person name="Iraqui Houssaini I."/>
            <person name="Jacquet M."/>
            <person name="Jimenez A."/>
            <person name="Jonniaux J.-L."/>
            <person name="Karpfinger-Hartl L."/>
            <person name="Lanfranchi G."/>
            <person name="Lepingle A."/>
            <person name="Levesque H."/>
            <person name="Lyck R."/>
            <person name="Maftahi M."/>
            <person name="Mallet L."/>
            <person name="Maurer C.T.C."/>
            <person name="Messenguy F."/>
            <person name="Mewes H.-W."/>
            <person name="Moestl D."/>
            <person name="Nasr F."/>
            <person name="Nicaud J.-M."/>
            <person name="Niedenthal R.K."/>
            <person name="Pandolfo D."/>
            <person name="Pierard A."/>
            <person name="Piravandi E."/>
            <person name="Planta R.J."/>
            <person name="Pohl T.M."/>
            <person name="Purnelle B."/>
            <person name="Rebischung C."/>
            <person name="Remacha M.A."/>
            <person name="Revuelta J.L."/>
            <person name="Rinke M."/>
            <person name="Saiz J.E."/>
            <person name="Sartorello F."/>
            <person name="Scherens B."/>
            <person name="Sen-Gupta M."/>
            <person name="Soler-Mira A."/>
            <person name="Urbanus J.H.M."/>
            <person name="Valle G."/>
            <person name="Van Dyck L."/>
            <person name="Verhasselt P."/>
            <person name="Vierendeels F."/>
            <person name="Vissers S."/>
            <person name="Voet M."/>
            <person name="Volckaert G."/>
            <person name="Wach A."/>
            <person name="Wambutt R."/>
            <person name="Wedler H."/>
            <person name="Zollner A."/>
            <person name="Hani J."/>
        </authorList>
    </citation>
    <scope>NUCLEOTIDE SEQUENCE [LARGE SCALE GENOMIC DNA]</scope>
    <source>
        <strain>ATCC 204508 / S288c</strain>
    </source>
</reference>
<reference key="3">
    <citation type="journal article" date="2014" name="G3 (Bethesda)">
        <title>The reference genome sequence of Saccharomyces cerevisiae: Then and now.</title>
        <authorList>
            <person name="Engel S.R."/>
            <person name="Dietrich F.S."/>
            <person name="Fisk D.G."/>
            <person name="Binkley G."/>
            <person name="Balakrishnan R."/>
            <person name="Costanzo M.C."/>
            <person name="Dwight S.S."/>
            <person name="Hitz B.C."/>
            <person name="Karra K."/>
            <person name="Nash R.S."/>
            <person name="Weng S."/>
            <person name="Wong E.D."/>
            <person name="Lloyd P."/>
            <person name="Skrzypek M.S."/>
            <person name="Miyasato S.R."/>
            <person name="Simison M."/>
            <person name="Cherry J.M."/>
        </authorList>
    </citation>
    <scope>GENOME REANNOTATION</scope>
    <source>
        <strain>ATCC 204508 / S288c</strain>
    </source>
</reference>
<reference key="4">
    <citation type="journal article" date="2007" name="Genome Res.">
        <title>Approaching a complete repository of sequence-verified protein-encoding clones for Saccharomyces cerevisiae.</title>
        <authorList>
            <person name="Hu Y."/>
            <person name="Rolfs A."/>
            <person name="Bhullar B."/>
            <person name="Murthy T.V.S."/>
            <person name="Zhu C."/>
            <person name="Berger M.F."/>
            <person name="Camargo A.A."/>
            <person name="Kelley F."/>
            <person name="McCarron S."/>
            <person name="Jepson D."/>
            <person name="Richardson A."/>
            <person name="Raphael J."/>
            <person name="Moreira D."/>
            <person name="Taycher E."/>
            <person name="Zuo D."/>
            <person name="Mohr S."/>
            <person name="Kane M.F."/>
            <person name="Williamson J."/>
            <person name="Simpson A.J.G."/>
            <person name="Bulyk M.L."/>
            <person name="Harlow E."/>
            <person name="Marsischky G."/>
            <person name="Kolodner R.D."/>
            <person name="LaBaer J."/>
        </authorList>
    </citation>
    <scope>NUCLEOTIDE SEQUENCE [GENOMIC DNA]</scope>
    <source>
        <strain>ATCC 204508 / S288c</strain>
    </source>
</reference>
<reference key="5">
    <citation type="journal article" date="2003" name="EMBO J.">
        <title>Ssu72 is a phosphatase essential for transcription termination of snoRNAs and specific mRNAs in yeast.</title>
        <authorList>
            <person name="Ganem C."/>
            <person name="Devaux F."/>
            <person name="Torchet C."/>
            <person name="Jacq C."/>
            <person name="Quevillon-Cheruel S."/>
            <person name="Labesse G."/>
            <person name="Facca C."/>
            <person name="Faye G."/>
        </authorList>
    </citation>
    <scope>FUNCTION IN SNORNA 3-END FORMATION</scope>
</reference>
<reference key="6">
    <citation type="journal article" date="2003" name="J. Biol. Chem.">
        <title>Organization and function of APT, a subcomplex of the yeast cleavage and polyadenylation factor involved in the formation of mRNA and small nucleolar RNA 3'-ends.</title>
        <authorList>
            <person name="Nedea E."/>
            <person name="He X."/>
            <person name="Kim M."/>
            <person name="Pootoolal J."/>
            <person name="Zhong G."/>
            <person name="Canadien V."/>
            <person name="Hughes T."/>
            <person name="Buratowski S."/>
            <person name="Moore C.L."/>
            <person name="Greenblatt J."/>
        </authorList>
    </citation>
    <scope>IDENTIFICATION IN THE CPF COMPLEX</scope>
    <scope>COMPOSITION OF THE APT COMPLEX</scope>
    <scope>SUBCELLULAR LOCATION</scope>
    <scope>IDENTIFICATION BY MASS SPECTROMETRY</scope>
</reference>
<reference key="7">
    <citation type="journal article" date="2004" name="Mol. Cell">
        <title>Ssu72 Is an RNA polymerase II CTD phosphatase.</title>
        <authorList>
            <person name="Krishnamurthy S."/>
            <person name="He X."/>
            <person name="Reyes-Reyes M."/>
            <person name="Moore C."/>
            <person name="Hampsey M."/>
        </authorList>
    </citation>
    <scope>FUNCTION AS A PHOSPHATASE</scope>
    <scope>FUNCTION IN SNORNA 3'-END FORMATION</scope>
</reference>
<reference key="8">
    <citation type="journal article" date="2008" name="Mol. Cell. Proteomics">
        <title>A multidimensional chromatography technology for in-depth phosphoproteome analysis.</title>
        <authorList>
            <person name="Albuquerque C.P."/>
            <person name="Smolka M.B."/>
            <person name="Payne S.H."/>
            <person name="Bafna V."/>
            <person name="Eng J."/>
            <person name="Zhou H."/>
        </authorList>
    </citation>
    <scope>IDENTIFICATION BY MASS SPECTROMETRY [LARGE SCALE ANALYSIS]</scope>
</reference>
<reference key="9">
    <citation type="journal article" date="2009" name="Science">
        <title>Global analysis of Cdk1 substrate phosphorylation sites provides insights into evolution.</title>
        <authorList>
            <person name="Holt L.J."/>
            <person name="Tuch B.B."/>
            <person name="Villen J."/>
            <person name="Johnson A.D."/>
            <person name="Gygi S.P."/>
            <person name="Morgan D.O."/>
        </authorList>
    </citation>
    <scope>IDENTIFICATION BY MASS SPECTROMETRY [LARGE SCALE ANALYSIS]</scope>
</reference>
<comment type="function">
    <text>Component of the cleavage and polyadenylation factor (CPF) complex, which plays a key role in polyadenylation-dependent pre-mRNA 3'-end formation and cooperates with cleavage factors including the CFIA complex and NAB4/CFIB. Component of the APT complex, which may be involved in polyadenylation-independent transcript 3'-end formation. SSU72 is required for 3'-end formation of snoRNAs.</text>
</comment>
<comment type="function">
    <text>Processively dephosphorylates Ser-5 of the heptad repeats YSPTSPS in the C-terminal domain of the largest RNA polymerase II subunit (RPB1).</text>
</comment>
<comment type="catalytic activity">
    <reaction>
        <text>O-phospho-L-seryl-[protein] + H2O = L-seryl-[protein] + phosphate</text>
        <dbReference type="Rhea" id="RHEA:20629"/>
        <dbReference type="Rhea" id="RHEA-COMP:9863"/>
        <dbReference type="Rhea" id="RHEA-COMP:11604"/>
        <dbReference type="ChEBI" id="CHEBI:15377"/>
        <dbReference type="ChEBI" id="CHEBI:29999"/>
        <dbReference type="ChEBI" id="CHEBI:43474"/>
        <dbReference type="ChEBI" id="CHEBI:83421"/>
        <dbReference type="EC" id="3.1.3.16"/>
    </reaction>
</comment>
<comment type="catalytic activity">
    <reaction>
        <text>O-phospho-L-threonyl-[protein] + H2O = L-threonyl-[protein] + phosphate</text>
        <dbReference type="Rhea" id="RHEA:47004"/>
        <dbReference type="Rhea" id="RHEA-COMP:11060"/>
        <dbReference type="Rhea" id="RHEA-COMP:11605"/>
        <dbReference type="ChEBI" id="CHEBI:15377"/>
        <dbReference type="ChEBI" id="CHEBI:30013"/>
        <dbReference type="ChEBI" id="CHEBI:43474"/>
        <dbReference type="ChEBI" id="CHEBI:61977"/>
        <dbReference type="EC" id="3.1.3.16"/>
    </reaction>
</comment>
<comment type="subunit">
    <text evidence="1">Component of the cleavage and polyadenylation factor (CPF) complex, which is composed of PTI1, SYC1, SSU72, GLC7, MPE1, REF2, PFS2, PTA1, YSH1/BRR5, SWD2, CFT2/YDH1, YTH1, CFT1/YHH1, FIP1 and PAP1. Component of the APT complex, which is a subcomplex of CPF, and is composed of PTI1, SYC1, SSU72, GLC7, REF2, PTA1 and SWD2.</text>
</comment>
<comment type="interaction">
    <interactant intactId="EBI-18134">
        <id>P53538</id>
    </interactant>
    <interactant intactId="EBI-14145">
        <id>Q01329</id>
        <label>PTA1</label>
    </interactant>
    <organismsDiffer>false</organismsDiffer>
    <experiments>7</experiments>
</comment>
<comment type="interaction">
    <interactant intactId="EBI-18134">
        <id>P53538</id>
    </interactant>
    <interactant intactId="EBI-26608">
        <id>P36104</id>
        <label>SWD2</label>
    </interactant>
    <organismsDiffer>false</organismsDiffer>
    <experiments>3</experiments>
</comment>
<comment type="subcellular location">
    <subcellularLocation>
        <location evidence="1">Nucleus</location>
    </subcellularLocation>
</comment>
<comment type="similarity">
    <text evidence="2">Belongs to the SSU72 phosphatase family.</text>
</comment>
<dbReference type="EC" id="3.1.3.16"/>
<dbReference type="EMBL" id="U20390">
    <property type="protein sequence ID" value="AAA86497.1"/>
    <property type="molecule type" value="Genomic_DNA"/>
</dbReference>
<dbReference type="EMBL" id="Z71498">
    <property type="protein sequence ID" value="CAA96125.1"/>
    <property type="molecule type" value="Genomic_DNA"/>
</dbReference>
<dbReference type="EMBL" id="AY558421">
    <property type="protein sequence ID" value="AAS56747.1"/>
    <property type="molecule type" value="Genomic_DNA"/>
</dbReference>
<dbReference type="EMBL" id="BK006947">
    <property type="protein sequence ID" value="DAA10334.1"/>
    <property type="molecule type" value="Genomic_DNA"/>
</dbReference>
<dbReference type="PIR" id="S63180">
    <property type="entry name" value="S63180"/>
</dbReference>
<dbReference type="RefSeq" id="NP_014177.1">
    <property type="nucleotide sequence ID" value="NM_001183060.1"/>
</dbReference>
<dbReference type="SMR" id="P53538"/>
<dbReference type="BioGRID" id="35614">
    <property type="interactions" value="246"/>
</dbReference>
<dbReference type="ComplexPortal" id="CPX-1053">
    <property type="entry name" value="Cleavage and polyadenylation specificity factor complex"/>
</dbReference>
<dbReference type="DIP" id="DIP-6700N"/>
<dbReference type="FunCoup" id="P53538">
    <property type="interactions" value="1113"/>
</dbReference>
<dbReference type="IntAct" id="P53538">
    <property type="interactions" value="18"/>
</dbReference>
<dbReference type="MINT" id="P53538"/>
<dbReference type="STRING" id="4932.YNL222W"/>
<dbReference type="iPTMnet" id="P53538"/>
<dbReference type="PaxDb" id="4932-YNL222W"/>
<dbReference type="PeptideAtlas" id="P53538"/>
<dbReference type="EnsemblFungi" id="YNL222W_mRNA">
    <property type="protein sequence ID" value="YNL222W"/>
    <property type="gene ID" value="YNL222W"/>
</dbReference>
<dbReference type="GeneID" id="855499"/>
<dbReference type="KEGG" id="sce:YNL222W"/>
<dbReference type="AGR" id="SGD:S000005166"/>
<dbReference type="SGD" id="S000005166">
    <property type="gene designation" value="SSU72"/>
</dbReference>
<dbReference type="VEuPathDB" id="FungiDB:YNL222W"/>
<dbReference type="eggNOG" id="KOG2424">
    <property type="taxonomic scope" value="Eukaryota"/>
</dbReference>
<dbReference type="GeneTree" id="ENSGT00390000010165"/>
<dbReference type="HOGENOM" id="CLU_062463_0_1_1"/>
<dbReference type="InParanoid" id="P53538"/>
<dbReference type="OMA" id="TQPNVYQ"/>
<dbReference type="OrthoDB" id="57957at2759"/>
<dbReference type="BioCyc" id="YEAST:G3O-33225-MONOMER"/>
<dbReference type="BioGRID-ORCS" id="855499">
    <property type="hits" value="1 hit in 10 CRISPR screens"/>
</dbReference>
<dbReference type="PRO" id="PR:P53538"/>
<dbReference type="Proteomes" id="UP000002311">
    <property type="component" value="Chromosome XIV"/>
</dbReference>
<dbReference type="RNAct" id="P53538">
    <property type="molecule type" value="protein"/>
</dbReference>
<dbReference type="GO" id="GO:0005847">
    <property type="term" value="C:mRNA cleavage and polyadenylation specificity factor complex"/>
    <property type="evidence" value="ECO:0000314"/>
    <property type="project" value="SGD"/>
</dbReference>
<dbReference type="GO" id="GO:0005634">
    <property type="term" value="C:nucleus"/>
    <property type="evidence" value="ECO:0000316"/>
    <property type="project" value="SGD"/>
</dbReference>
<dbReference type="GO" id="GO:0004721">
    <property type="term" value="F:phosphoprotein phosphatase activity"/>
    <property type="evidence" value="ECO:0000316"/>
    <property type="project" value="SGD"/>
</dbReference>
<dbReference type="GO" id="GO:0004722">
    <property type="term" value="F:protein serine/threonine phosphatase activity"/>
    <property type="evidence" value="ECO:0000314"/>
    <property type="project" value="SGD"/>
</dbReference>
<dbReference type="GO" id="GO:0004725">
    <property type="term" value="F:protein tyrosine phosphatase activity"/>
    <property type="evidence" value="ECO:0000314"/>
    <property type="project" value="SGD"/>
</dbReference>
<dbReference type="GO" id="GO:0008420">
    <property type="term" value="F:RNA polymerase II CTD heptapeptide repeat phosphatase activity"/>
    <property type="evidence" value="ECO:0000314"/>
    <property type="project" value="SGD"/>
</dbReference>
<dbReference type="GO" id="GO:0031124">
    <property type="term" value="P:mRNA 3'-end processing"/>
    <property type="evidence" value="ECO:0000315"/>
    <property type="project" value="SGD"/>
</dbReference>
<dbReference type="GO" id="GO:0009302">
    <property type="term" value="P:sno(s)RNA transcription"/>
    <property type="evidence" value="ECO:0000315"/>
    <property type="project" value="SGD"/>
</dbReference>
<dbReference type="GO" id="GO:0006369">
    <property type="term" value="P:termination of RNA polymerase II transcription"/>
    <property type="evidence" value="ECO:0000315"/>
    <property type="project" value="SGD"/>
</dbReference>
<dbReference type="GO" id="GO:0030847">
    <property type="term" value="P:termination of RNA polymerase II transcription, exosome-dependent"/>
    <property type="evidence" value="ECO:0000315"/>
    <property type="project" value="SGD"/>
</dbReference>
<dbReference type="GO" id="GO:0030846">
    <property type="term" value="P:termination of RNA polymerase II transcription, poly(A)-coupled"/>
    <property type="evidence" value="ECO:0000315"/>
    <property type="project" value="SGD"/>
</dbReference>
<dbReference type="GO" id="GO:0031564">
    <property type="term" value="P:transcription antitermination"/>
    <property type="evidence" value="ECO:0000315"/>
    <property type="project" value="SGD"/>
</dbReference>
<dbReference type="GO" id="GO:0006368">
    <property type="term" value="P:transcription elongation by RNA polymerase II"/>
    <property type="evidence" value="ECO:0000315"/>
    <property type="project" value="SGD"/>
</dbReference>
<dbReference type="GO" id="GO:0006367">
    <property type="term" value="P:transcription initiation at RNA polymerase II promoter"/>
    <property type="evidence" value="ECO:0000316"/>
    <property type="project" value="SGD"/>
</dbReference>
<dbReference type="GO" id="GO:0001174">
    <property type="term" value="P:transcriptional start site selection at RNA polymerase II promoter"/>
    <property type="evidence" value="ECO:0000315"/>
    <property type="project" value="SGD"/>
</dbReference>
<dbReference type="FunFam" id="3.40.50.2300:FF:000039">
    <property type="entry name" value="RNA polymerase II subunit A C-terminal domain phosphatase"/>
    <property type="match status" value="1"/>
</dbReference>
<dbReference type="FunFam" id="3.40.50.2300:FF:000189">
    <property type="entry name" value="SSU72p Phosphatase and transcription/RNA-processing factor"/>
    <property type="match status" value="1"/>
</dbReference>
<dbReference type="Gene3D" id="3.40.50.2300">
    <property type="match status" value="2"/>
</dbReference>
<dbReference type="InterPro" id="IPR006811">
    <property type="entry name" value="RNA_pol_II_suA"/>
</dbReference>
<dbReference type="PANTHER" id="PTHR20383">
    <property type="entry name" value="RNA POLYMERASE II SUBUNIT A C-TERMINAL DOMAIN PHOSPHATASE"/>
    <property type="match status" value="1"/>
</dbReference>
<dbReference type="Pfam" id="PF04722">
    <property type="entry name" value="Ssu72"/>
    <property type="match status" value="1"/>
</dbReference>
<name>SSU72_YEAST</name>
<keyword id="KW-0378">Hydrolase</keyword>
<keyword id="KW-0507">mRNA processing</keyword>
<keyword id="KW-0539">Nucleus</keyword>
<keyword id="KW-0904">Protein phosphatase</keyword>
<keyword id="KW-1185">Reference proteome</keyword>
<sequence length="206" mass="23469">MPSHRNSNLKFCTVCASNNNRSMESHKVLQEAGYNVSSYGTGSAVRLPGLSIDKPNVYSFGTPYNDIYNDLLSQSADRYKSNGLLQMLDRNRRLKKAPEKWQESTKVFDFVFTCEERCFDAVCEDLMNRGGKLNKIVHVINVDIKDDDENAKIGSKAILELADMLNDKIEQCEKDDIPFEDCIMDILTEWQSSHSQLPSLYAPSYY</sequence>
<feature type="chain" id="PRO_0000072230" description="RNA polymerase II subunit A C-terminal domain phosphatase SSU72">
    <location>
        <begin position="1"/>
        <end position="206"/>
    </location>
</feature>
<feature type="sequence conflict" description="In Ref. 4; AAS56747." evidence="2" ref="4">
    <original>S</original>
    <variation>P</variation>
    <location>
        <position position="199"/>
    </location>
</feature>
<evidence type="ECO:0000269" key="1">
    <source>
    </source>
</evidence>
<evidence type="ECO:0000305" key="2"/>
<accession>P53538</accession>
<accession>D6W0W8</accession>
<accession>Q6Q569</accession>
<organism>
    <name type="scientific">Saccharomyces cerevisiae (strain ATCC 204508 / S288c)</name>
    <name type="common">Baker's yeast</name>
    <dbReference type="NCBI Taxonomy" id="559292"/>
    <lineage>
        <taxon>Eukaryota</taxon>
        <taxon>Fungi</taxon>
        <taxon>Dikarya</taxon>
        <taxon>Ascomycota</taxon>
        <taxon>Saccharomycotina</taxon>
        <taxon>Saccharomycetes</taxon>
        <taxon>Saccharomycetales</taxon>
        <taxon>Saccharomycetaceae</taxon>
        <taxon>Saccharomyces</taxon>
    </lineage>
</organism>
<protein>
    <recommendedName>
        <fullName>RNA polymerase II subunit A C-terminal domain phosphatase SSU72</fullName>
        <shortName>CTD phosphatase SSU72</shortName>
        <ecNumber>3.1.3.16</ecNumber>
    </recommendedName>
    <alternativeName>
        <fullName>Suppressor of SUA7 protein 2</fullName>
    </alternativeName>
</protein>
<gene>
    <name type="primary">SSU72</name>
    <name type="ordered locus">YNL222W</name>
    <name type="ORF">N1279</name>
</gene>
<proteinExistence type="evidence at protein level"/>